<keyword id="KW-0027">Amidation</keyword>
<keyword id="KW-0108">Calcium channel impairing toxin</keyword>
<keyword id="KW-0903">Direct protein sequencing</keyword>
<keyword id="KW-1015">Disulfide bond</keyword>
<keyword id="KW-0872">Ion channel impairing toxin</keyword>
<keyword id="KW-0960">Knottin</keyword>
<keyword id="KW-0528">Neurotoxin</keyword>
<keyword id="KW-0638">Presynaptic neurotoxin</keyword>
<keyword id="KW-0964">Secreted</keyword>
<keyword id="KW-0732">Signal</keyword>
<keyword id="KW-0800">Toxin</keyword>
<keyword id="KW-1218">Voltage-gated calcium channel impairing toxin</keyword>
<reference key="1">
    <citation type="journal article" date="2008" name="J. Mass Spectrom.">
        <title>Probing peptide libraries from Conus achatinus using mass spectrometry and cDNA sequencing: identification of delta and omega-conotoxins.</title>
        <authorList>
            <person name="Gowd K.H."/>
            <person name="Dewan K.K."/>
            <person name="Iengar P."/>
            <person name="Krishnan K.S."/>
            <person name="Balaram P."/>
        </authorList>
    </citation>
    <scope>NUCLEOTIDE SEQUENCE [MRNA]</scope>
    <scope>PROTEIN SEQUENCE OF 56-67</scope>
    <scope>AMIDATION AT CYS-70</scope>
    <scope>IDENTIFICATION BY MASS SPECTROMETRY</scope>
    <source>
        <tissue>Venom</tissue>
        <tissue>Venom duct</tissue>
    </source>
</reference>
<accession>P0C8V8</accession>
<dbReference type="SMR" id="P0C8V8"/>
<dbReference type="ConoServer" id="3703">
    <property type="toxin name" value="Ac6.4 precursor"/>
</dbReference>
<dbReference type="GO" id="GO:0005576">
    <property type="term" value="C:extracellular region"/>
    <property type="evidence" value="ECO:0007669"/>
    <property type="project" value="UniProtKB-SubCell"/>
</dbReference>
<dbReference type="GO" id="GO:0044231">
    <property type="term" value="C:host cell presynaptic membrane"/>
    <property type="evidence" value="ECO:0007669"/>
    <property type="project" value="UniProtKB-KW"/>
</dbReference>
<dbReference type="GO" id="GO:0005246">
    <property type="term" value="F:calcium channel regulator activity"/>
    <property type="evidence" value="ECO:0007669"/>
    <property type="project" value="UniProtKB-KW"/>
</dbReference>
<dbReference type="GO" id="GO:0008200">
    <property type="term" value="F:ion channel inhibitor activity"/>
    <property type="evidence" value="ECO:0007669"/>
    <property type="project" value="InterPro"/>
</dbReference>
<dbReference type="GO" id="GO:0090729">
    <property type="term" value="F:toxin activity"/>
    <property type="evidence" value="ECO:0007669"/>
    <property type="project" value="UniProtKB-KW"/>
</dbReference>
<dbReference type="InterPro" id="IPR004214">
    <property type="entry name" value="Conotoxin"/>
</dbReference>
<dbReference type="InterPro" id="IPR012321">
    <property type="entry name" value="Conotoxin_omega-typ_CS"/>
</dbReference>
<dbReference type="Pfam" id="PF02950">
    <property type="entry name" value="Conotoxin"/>
    <property type="match status" value="1"/>
</dbReference>
<dbReference type="SUPFAM" id="SSF57059">
    <property type="entry name" value="omega toxin-like"/>
    <property type="match status" value="1"/>
</dbReference>
<dbReference type="PROSITE" id="PS60004">
    <property type="entry name" value="OMEGA_CONOTOXIN"/>
    <property type="match status" value="1"/>
</dbReference>
<name>O164_CONAH</name>
<protein>
    <recommendedName>
        <fullName>Omega-conotoxin-like Ac6.4</fullName>
    </recommendedName>
</protein>
<sequence>MKLTCVVIVAVLLLTACQLLTADDSRGTQKHRALRSDTKLSMSTRCKGKGASCSRTMYNCCTGSCNRGKCG</sequence>
<feature type="signal peptide" evidence="3">
    <location>
        <begin position="1"/>
        <end position="22"/>
    </location>
</feature>
<feature type="propeptide" id="PRO_0000366089" evidence="1">
    <location>
        <begin position="23"/>
        <end position="45"/>
    </location>
</feature>
<feature type="peptide" id="PRO_0000366090" description="Omega-conotoxin-like Ac6.4">
    <location>
        <begin position="46"/>
        <end position="70"/>
    </location>
</feature>
<feature type="modified residue" description="Cysteine amide" evidence="4">
    <location>
        <position position="70"/>
    </location>
</feature>
<feature type="disulfide bond" evidence="2">
    <location>
        <begin position="46"/>
        <end position="61"/>
    </location>
</feature>
<feature type="disulfide bond" evidence="2">
    <location>
        <begin position="53"/>
        <end position="65"/>
    </location>
</feature>
<feature type="disulfide bond" evidence="2">
    <location>
        <begin position="60"/>
        <end position="70"/>
    </location>
</feature>
<evidence type="ECO:0000250" key="1"/>
<evidence type="ECO:0000250" key="2">
    <source>
        <dbReference type="UniProtKB" id="P05484"/>
    </source>
</evidence>
<evidence type="ECO:0000255" key="3"/>
<evidence type="ECO:0000269" key="4">
    <source>
    </source>
</evidence>
<evidence type="ECO:0000305" key="5"/>
<organism>
    <name type="scientific">Conus achatinus</name>
    <name type="common">Little frog cone</name>
    <dbReference type="NCBI Taxonomy" id="369967"/>
    <lineage>
        <taxon>Eukaryota</taxon>
        <taxon>Metazoa</taxon>
        <taxon>Spiralia</taxon>
        <taxon>Lophotrochozoa</taxon>
        <taxon>Mollusca</taxon>
        <taxon>Gastropoda</taxon>
        <taxon>Caenogastropoda</taxon>
        <taxon>Neogastropoda</taxon>
        <taxon>Conoidea</taxon>
        <taxon>Conidae</taxon>
        <taxon>Conus</taxon>
        <taxon>Pionoconus</taxon>
    </lineage>
</organism>
<proteinExistence type="evidence at protein level"/>
<comment type="function">
    <text evidence="1">Omega-conotoxins act at presynaptic membranes, they bind and block voltage-gated calcium channels (Cav).</text>
</comment>
<comment type="subcellular location">
    <subcellularLocation>
        <location>Secreted</location>
    </subcellularLocation>
</comment>
<comment type="tissue specificity">
    <text>Expressed by the venom duct.</text>
</comment>
<comment type="domain">
    <text evidence="1">The presence of a 'disulfide through disulfide knot' structurally defines this protein as a knottin.</text>
</comment>
<comment type="domain">
    <text>The cysteine framework is VI/VII (C-C-CC-C-C).</text>
</comment>
<comment type="similarity">
    <text evidence="5">Belongs to the conotoxin O1 superfamily.</text>
</comment>